<dbReference type="EC" id="6.3.4.-" evidence="1"/>
<dbReference type="EMBL" id="BA000017">
    <property type="protein sequence ID" value="BAB57288.1"/>
    <property type="molecule type" value="Genomic_DNA"/>
</dbReference>
<dbReference type="RefSeq" id="WP_000843611.1">
    <property type="nucleotide sequence ID" value="NC_002758.2"/>
</dbReference>
<dbReference type="SMR" id="Q99UX8"/>
<dbReference type="KEGG" id="sav:SAV1126"/>
<dbReference type="HOGENOM" id="CLU_038915_0_2_9"/>
<dbReference type="PhylomeDB" id="Q99UX8"/>
<dbReference type="Proteomes" id="UP000002481">
    <property type="component" value="Chromosome"/>
</dbReference>
<dbReference type="GO" id="GO:0005737">
    <property type="term" value="C:cytoplasm"/>
    <property type="evidence" value="ECO:0007669"/>
    <property type="project" value="UniProtKB-SubCell"/>
</dbReference>
<dbReference type="GO" id="GO:0005524">
    <property type="term" value="F:ATP binding"/>
    <property type="evidence" value="ECO:0007669"/>
    <property type="project" value="UniProtKB-KW"/>
</dbReference>
<dbReference type="GO" id="GO:0016879">
    <property type="term" value="F:ligase activity, forming carbon-nitrogen bonds"/>
    <property type="evidence" value="ECO:0007669"/>
    <property type="project" value="UniProtKB-UniRule"/>
</dbReference>
<dbReference type="GO" id="GO:0000049">
    <property type="term" value="F:tRNA binding"/>
    <property type="evidence" value="ECO:0007669"/>
    <property type="project" value="UniProtKB-KW"/>
</dbReference>
<dbReference type="GO" id="GO:0006400">
    <property type="term" value="P:tRNA modification"/>
    <property type="evidence" value="ECO:0007669"/>
    <property type="project" value="UniProtKB-UniRule"/>
</dbReference>
<dbReference type="Gene3D" id="3.40.50.620">
    <property type="entry name" value="HUPs"/>
    <property type="match status" value="1"/>
</dbReference>
<dbReference type="HAMAP" id="MF_01539">
    <property type="entry name" value="TmcAL"/>
    <property type="match status" value="1"/>
</dbReference>
<dbReference type="InterPro" id="IPR014729">
    <property type="entry name" value="Rossmann-like_a/b/a_fold"/>
</dbReference>
<dbReference type="InterPro" id="IPR008513">
    <property type="entry name" value="tRNA(Met)_cyd_acetate_ligase"/>
</dbReference>
<dbReference type="NCBIfam" id="NF010191">
    <property type="entry name" value="PRK13670.1"/>
    <property type="match status" value="1"/>
</dbReference>
<dbReference type="PANTHER" id="PTHR37825">
    <property type="entry name" value="TRNA(MET) CYTIDINE ACETATE LIGASE"/>
    <property type="match status" value="1"/>
</dbReference>
<dbReference type="PANTHER" id="PTHR37825:SF1">
    <property type="entry name" value="TRNA(MET) CYTIDINE ACETATE LIGASE"/>
    <property type="match status" value="1"/>
</dbReference>
<dbReference type="Pfam" id="PF05636">
    <property type="entry name" value="HIGH_NTase1"/>
    <property type="match status" value="1"/>
</dbReference>
<dbReference type="SUPFAM" id="SSF52374">
    <property type="entry name" value="Nucleotidylyl transferase"/>
    <property type="match status" value="1"/>
</dbReference>
<sequence>MKSVGLITEYNPFHNGHQYHINQSKKLTNADVTIAIMSGNFVMRGEPAIYNKFTRAKMALSTADLVIELPATASLSSGDHFAELAVKVADYMSVDTIAFGSENNDIKTLKQLAHSINEIEQSESFSQKVKEGKSYPRIISELLEHHEALASPNNILGISYLKAIAKNAKNINAISIKRENAQHHDSLIQHHQFASGTSIRTSIISQDDHWHHVVPKDIQHLYVTPHITLNQIFPYLKYQIIAMTTDSLKNIYTVTEGFENRLKSNIYEATDFHHFVKLLKTKRYTYTHIQRLLMNVLLNIKPTDVTSNIHAVKVLAMNDRGRQYLKHLKTAFPERQYITNINKSNAHYFTNEIKATHIYNAISGQQQTDFNTPVIQQYR</sequence>
<reference key="1">
    <citation type="journal article" date="2001" name="Lancet">
        <title>Whole genome sequencing of meticillin-resistant Staphylococcus aureus.</title>
        <authorList>
            <person name="Kuroda M."/>
            <person name="Ohta T."/>
            <person name="Uchiyama I."/>
            <person name="Baba T."/>
            <person name="Yuzawa H."/>
            <person name="Kobayashi I."/>
            <person name="Cui L."/>
            <person name="Oguchi A."/>
            <person name="Aoki K."/>
            <person name="Nagai Y."/>
            <person name="Lian J.-Q."/>
            <person name="Ito T."/>
            <person name="Kanamori M."/>
            <person name="Matsumaru H."/>
            <person name="Maruyama A."/>
            <person name="Murakami H."/>
            <person name="Hosoyama A."/>
            <person name="Mizutani-Ui Y."/>
            <person name="Takahashi N.K."/>
            <person name="Sawano T."/>
            <person name="Inoue R."/>
            <person name="Kaito C."/>
            <person name="Sekimizu K."/>
            <person name="Hirakawa H."/>
            <person name="Kuhara S."/>
            <person name="Goto S."/>
            <person name="Yabuzaki J."/>
            <person name="Kanehisa M."/>
            <person name="Yamashita A."/>
            <person name="Oshima K."/>
            <person name="Furuya K."/>
            <person name="Yoshino C."/>
            <person name="Shiba T."/>
            <person name="Hattori M."/>
            <person name="Ogasawara N."/>
            <person name="Hayashi H."/>
            <person name="Hiramatsu K."/>
        </authorList>
    </citation>
    <scope>NUCLEOTIDE SEQUENCE [LARGE SCALE GENOMIC DNA]</scope>
    <source>
        <strain>Mu50 / ATCC 700699</strain>
    </source>
</reference>
<gene>
    <name evidence="1" type="primary">tmcAL</name>
    <name type="ordered locus">SAV1126</name>
</gene>
<protein>
    <recommendedName>
        <fullName evidence="1">tRNA(Met) cytidine acetate ligase</fullName>
        <ecNumber evidence="1">6.3.4.-</ecNumber>
    </recommendedName>
</protein>
<name>TMCAL_STAAM</name>
<feature type="chain" id="PRO_0000147179" description="tRNA(Met) cytidine acetate ligase">
    <location>
        <begin position="1"/>
        <end position="379"/>
    </location>
</feature>
<feature type="binding site" evidence="1">
    <location>
        <begin position="7"/>
        <end position="20"/>
    </location>
    <ligand>
        <name>ATP</name>
        <dbReference type="ChEBI" id="CHEBI:30616"/>
    </ligand>
</feature>
<feature type="binding site" evidence="1">
    <location>
        <position position="100"/>
    </location>
    <ligand>
        <name>ATP</name>
        <dbReference type="ChEBI" id="CHEBI:30616"/>
    </ligand>
</feature>
<feature type="binding site" evidence="1">
    <location>
        <position position="153"/>
    </location>
    <ligand>
        <name>ATP</name>
        <dbReference type="ChEBI" id="CHEBI:30616"/>
    </ligand>
</feature>
<feature type="binding site" evidence="1">
    <location>
        <position position="178"/>
    </location>
    <ligand>
        <name>ATP</name>
        <dbReference type="ChEBI" id="CHEBI:30616"/>
    </ligand>
</feature>
<organism>
    <name type="scientific">Staphylococcus aureus (strain Mu50 / ATCC 700699)</name>
    <dbReference type="NCBI Taxonomy" id="158878"/>
    <lineage>
        <taxon>Bacteria</taxon>
        <taxon>Bacillati</taxon>
        <taxon>Bacillota</taxon>
        <taxon>Bacilli</taxon>
        <taxon>Bacillales</taxon>
        <taxon>Staphylococcaceae</taxon>
        <taxon>Staphylococcus</taxon>
    </lineage>
</organism>
<proteinExistence type="inferred from homology"/>
<comment type="function">
    <text evidence="1">Catalyzes the formation of N(4)-acetylcytidine (ac(4)C) at the wobble position of elongator tRNA(Met), using acetate and ATP as substrates. First activates an acetate ion to form acetyladenylate (Ac-AMP) and then transfers the acetyl group to tRNA to form ac(4)C34.</text>
</comment>
<comment type="catalytic activity">
    <reaction evidence="1">
        <text>cytidine(34) in elongator tRNA(Met) + acetate + ATP = N(4)-acetylcytidine(34) in elongator tRNA(Met) + AMP + diphosphate</text>
        <dbReference type="Rhea" id="RHEA:58144"/>
        <dbReference type="Rhea" id="RHEA-COMP:10693"/>
        <dbReference type="Rhea" id="RHEA-COMP:10694"/>
        <dbReference type="ChEBI" id="CHEBI:30089"/>
        <dbReference type="ChEBI" id="CHEBI:30616"/>
        <dbReference type="ChEBI" id="CHEBI:33019"/>
        <dbReference type="ChEBI" id="CHEBI:74900"/>
        <dbReference type="ChEBI" id="CHEBI:82748"/>
        <dbReference type="ChEBI" id="CHEBI:456215"/>
    </reaction>
</comment>
<comment type="subcellular location">
    <subcellularLocation>
        <location evidence="1">Cytoplasm</location>
    </subcellularLocation>
</comment>
<comment type="similarity">
    <text evidence="1">Belongs to the TmcAL family.</text>
</comment>
<keyword id="KW-0067">ATP-binding</keyword>
<keyword id="KW-0963">Cytoplasm</keyword>
<keyword id="KW-0436">Ligase</keyword>
<keyword id="KW-0547">Nucleotide-binding</keyword>
<keyword id="KW-0694">RNA-binding</keyword>
<keyword id="KW-0819">tRNA processing</keyword>
<keyword id="KW-0820">tRNA-binding</keyword>
<evidence type="ECO:0000255" key="1">
    <source>
        <dbReference type="HAMAP-Rule" id="MF_01539"/>
    </source>
</evidence>
<accession>Q99UX8</accession>